<organism>
    <name type="scientific">Neurospora crassa (strain ATCC 24698 / 74-OR23-1A / CBS 708.71 / DSM 1257 / FGSC 987)</name>
    <dbReference type="NCBI Taxonomy" id="367110"/>
    <lineage>
        <taxon>Eukaryota</taxon>
        <taxon>Fungi</taxon>
        <taxon>Dikarya</taxon>
        <taxon>Ascomycota</taxon>
        <taxon>Pezizomycotina</taxon>
        <taxon>Sordariomycetes</taxon>
        <taxon>Sordariomycetidae</taxon>
        <taxon>Sordariales</taxon>
        <taxon>Sordariaceae</taxon>
        <taxon>Neurospora</taxon>
    </lineage>
</organism>
<proteinExistence type="inferred from homology"/>
<comment type="function">
    <text evidence="1">Catalyzes the hydrolysis of inorganic polyphosphate (polyP) chains of many hundreds of phosphate residues into shorter lengths.</text>
</comment>
<comment type="catalytic activity">
    <reaction evidence="1">
        <text>[phosphate](n+1) + n H2O = (n+1) phosphate + n H(+)</text>
        <dbReference type="Rhea" id="RHEA:22452"/>
        <dbReference type="Rhea" id="RHEA-COMP:14280"/>
        <dbReference type="ChEBI" id="CHEBI:15377"/>
        <dbReference type="ChEBI" id="CHEBI:15378"/>
        <dbReference type="ChEBI" id="CHEBI:16838"/>
        <dbReference type="ChEBI" id="CHEBI:43474"/>
        <dbReference type="EC" id="3.6.1.10"/>
    </reaction>
</comment>
<comment type="cofactor">
    <cofactor evidence="1">
        <name>a divalent metal cation</name>
        <dbReference type="ChEBI" id="CHEBI:60240"/>
    </cofactor>
</comment>
<comment type="subcellular location">
    <subcellularLocation>
        <location evidence="1">Vacuole membrane</location>
        <topology evidence="1">Single-pass type II membrane protein</topology>
    </subcellularLocation>
</comment>
<comment type="PTM">
    <text evidence="1">Processing by proteases in the vacuole may be required for activation.</text>
</comment>
<comment type="similarity">
    <text evidence="4">Belongs to the endopolyphosphatase PPN1 family.</text>
</comment>
<comment type="sequence caution" evidence="4">
    <conflict type="erroneous gene model prediction">
        <sequence resource="EMBL-CDS" id="CAB97279"/>
    </conflict>
</comment>
<comment type="sequence caution" evidence="4">
    <conflict type="erroneous initiation">
        <sequence resource="EMBL-CDS" id="EAA36146"/>
    </conflict>
    <text>Extended N-terminus.</text>
</comment>
<reference key="1">
    <citation type="journal article" date="2003" name="Nucleic Acids Res.">
        <title>What's in the genome of a filamentous fungus? Analysis of the Neurospora genome sequence.</title>
        <authorList>
            <person name="Mannhaupt G."/>
            <person name="Montrone C."/>
            <person name="Haase D."/>
            <person name="Mewes H.-W."/>
            <person name="Aign V."/>
            <person name="Hoheisel J.D."/>
            <person name="Fartmann B."/>
            <person name="Nyakatura G."/>
            <person name="Kempken F."/>
            <person name="Maier J."/>
            <person name="Schulte U."/>
        </authorList>
    </citation>
    <scope>NUCLEOTIDE SEQUENCE [LARGE SCALE GENOMIC DNA]</scope>
    <source>
        <strain>ATCC 24698 / 74-OR23-1A / CBS 708.71 / DSM 1257 / FGSC 987</strain>
    </source>
</reference>
<reference key="2">
    <citation type="journal article" date="2003" name="Nature">
        <title>The genome sequence of the filamentous fungus Neurospora crassa.</title>
        <authorList>
            <person name="Galagan J.E."/>
            <person name="Calvo S.E."/>
            <person name="Borkovich K.A."/>
            <person name="Selker E.U."/>
            <person name="Read N.D."/>
            <person name="Jaffe D.B."/>
            <person name="FitzHugh W."/>
            <person name="Ma L.-J."/>
            <person name="Smirnov S."/>
            <person name="Purcell S."/>
            <person name="Rehman B."/>
            <person name="Elkins T."/>
            <person name="Engels R."/>
            <person name="Wang S."/>
            <person name="Nielsen C.B."/>
            <person name="Butler J."/>
            <person name="Endrizzi M."/>
            <person name="Qui D."/>
            <person name="Ianakiev P."/>
            <person name="Bell-Pedersen D."/>
            <person name="Nelson M.A."/>
            <person name="Werner-Washburne M."/>
            <person name="Selitrennikoff C.P."/>
            <person name="Kinsey J.A."/>
            <person name="Braun E.L."/>
            <person name="Zelter A."/>
            <person name="Schulte U."/>
            <person name="Kothe G.O."/>
            <person name="Jedd G."/>
            <person name="Mewes H.-W."/>
            <person name="Staben C."/>
            <person name="Marcotte E."/>
            <person name="Greenberg D."/>
            <person name="Roy A."/>
            <person name="Foley K."/>
            <person name="Naylor J."/>
            <person name="Stange-Thomann N."/>
            <person name="Barrett R."/>
            <person name="Gnerre S."/>
            <person name="Kamal M."/>
            <person name="Kamvysselis M."/>
            <person name="Mauceli E.W."/>
            <person name="Bielke C."/>
            <person name="Rudd S."/>
            <person name="Frishman D."/>
            <person name="Krystofova S."/>
            <person name="Rasmussen C."/>
            <person name="Metzenberg R.L."/>
            <person name="Perkins D.D."/>
            <person name="Kroken S."/>
            <person name="Cogoni C."/>
            <person name="Macino G."/>
            <person name="Catcheside D.E.A."/>
            <person name="Li W."/>
            <person name="Pratt R.J."/>
            <person name="Osmani S.A."/>
            <person name="DeSouza C.P.C."/>
            <person name="Glass N.L."/>
            <person name="Orbach M.J."/>
            <person name="Berglund J.A."/>
            <person name="Voelker R."/>
            <person name="Yarden O."/>
            <person name="Plamann M."/>
            <person name="Seiler S."/>
            <person name="Dunlap J.C."/>
            <person name="Radford A."/>
            <person name="Aramayo R."/>
            <person name="Natvig D.O."/>
            <person name="Alex L.A."/>
            <person name="Mannhaupt G."/>
            <person name="Ebbole D.J."/>
            <person name="Freitag M."/>
            <person name="Paulsen I."/>
            <person name="Sachs M.S."/>
            <person name="Lander E.S."/>
            <person name="Nusbaum C."/>
            <person name="Birren B.W."/>
        </authorList>
    </citation>
    <scope>NUCLEOTIDE SEQUENCE [LARGE SCALE GENOMIC DNA]</scope>
    <source>
        <strain>ATCC 24698 / 74-OR23-1A / CBS 708.71 / DSM 1257 / FGSC 987</strain>
    </source>
</reference>
<sequence length="731" mass="83680">MSLSRCILGLACLWHGVIASPLGAVPSNIPIATDLQTAAETVAQPIANSARKLHGKFLHITDLHPDQFYKPHSSTDEADACHRGKGPAGVYGAEVSDCDSPFALINATFDWIAANVKDDIDFVIWTGDTARHDSDEGVPRNADQVLGTNRWIADKMAELFSDSTGRHLEIPIVPTLGNNDILPHNILLPGPNSWLQHYTHIWRRFVPEAQRHSFQFGGWFYVEVIPNRLAIFSLNTLYFFDRNAGTDGCASPSEPGYKQMEWLRIQLHIMRERGMKAILMGHVPPARTDSKKLWDENCWQKYSLWLRQYRDVVVSGVFGHMNIDHFFIHDERDINVGQLAGLADNSIDIREAMDDELSVTGAADYLRELRQNWAKLQPPPTDSKNSGQLKKGKKGRKGKKKKPDVWGERYSLSLVSPSIVPNYYPALRIVEYNISGLEDTPVWRDAAKDAMSIELEQNDRQKHLDLKRQHPSHMEDDDEIDAQKKKGKKHKGGDSKPKKPDFLIPHPPAKSSPPGPAYSPQPLTLTGYTQYFANLTHINNITTEASSALLDHDEEEETWVDWLLRWRKGRHGNRKPIHPKPDPREFQFEVEYSTFNDKLYKLRDLTVKNYVELAYRISKQPKKGKAKSIDVSYESAAEEEEEEEEEEEEDLFEEVEETDEEEEQEDDDLSDGEEVDDDSDEDELETETFKKHDKKKHKKKKGKKRQNKVWMHFLTHAFVSTVEKEDLKKFT</sequence>
<name>PPN1_NEUCR</name>
<protein>
    <recommendedName>
        <fullName>Endopolyphosphatase</fullName>
        <ecNumber>3.6.1.10</ecNumber>
    </recommendedName>
</protein>
<gene>
    <name type="primary">epp-1</name>
    <name type="synonym">ppn1</name>
    <name type="ORF">B24P7.140</name>
    <name type="ORF">NCU02996</name>
</gene>
<evidence type="ECO:0000250" key="1">
    <source>
        <dbReference type="UniProtKB" id="Q04119"/>
    </source>
</evidence>
<evidence type="ECO:0000255" key="2"/>
<evidence type="ECO:0000256" key="3">
    <source>
        <dbReference type="SAM" id="MobiDB-lite"/>
    </source>
</evidence>
<evidence type="ECO:0000305" key="4"/>
<feature type="chain" id="PRO_0000058548" description="Endopolyphosphatase">
    <location>
        <begin position="1"/>
        <end position="731"/>
    </location>
</feature>
<feature type="topological domain" description="Cytoplasmic" evidence="2">
    <location>
        <begin position="1"/>
        <end position="4"/>
    </location>
</feature>
<feature type="transmembrane region" description="Helical; Signal-anchor for type II membrane protein" evidence="2">
    <location>
        <begin position="5"/>
        <end position="25"/>
    </location>
</feature>
<feature type="topological domain" description="Vacuolar" evidence="2">
    <location>
        <begin position="26"/>
        <end position="731"/>
    </location>
</feature>
<feature type="region of interest" description="Disordered" evidence="3">
    <location>
        <begin position="375"/>
        <end position="403"/>
    </location>
</feature>
<feature type="region of interest" description="Disordered" evidence="3">
    <location>
        <begin position="456"/>
        <end position="522"/>
    </location>
</feature>
<feature type="region of interest" description="Disordered" evidence="3">
    <location>
        <begin position="626"/>
        <end position="706"/>
    </location>
</feature>
<feature type="compositionally biased region" description="Basic residues" evidence="3">
    <location>
        <begin position="390"/>
        <end position="402"/>
    </location>
</feature>
<feature type="compositionally biased region" description="Basic and acidic residues" evidence="3">
    <location>
        <begin position="457"/>
        <end position="474"/>
    </location>
</feature>
<feature type="compositionally biased region" description="Basic and acidic residues" evidence="3">
    <location>
        <begin position="492"/>
        <end position="501"/>
    </location>
</feature>
<feature type="compositionally biased region" description="Pro residues" evidence="3">
    <location>
        <begin position="505"/>
        <end position="519"/>
    </location>
</feature>
<feature type="compositionally biased region" description="Acidic residues" evidence="3">
    <location>
        <begin position="636"/>
        <end position="686"/>
    </location>
</feature>
<feature type="compositionally biased region" description="Basic residues" evidence="3">
    <location>
        <begin position="691"/>
        <end position="706"/>
    </location>
</feature>
<feature type="glycosylation site" description="N-linked (GlcNAc...) asparagine" evidence="2">
    <location>
        <position position="106"/>
    </location>
</feature>
<feature type="glycosylation site" description="N-linked (GlcNAc...) asparagine" evidence="2">
    <location>
        <position position="433"/>
    </location>
</feature>
<feature type="glycosylation site" description="N-linked (GlcNAc...) asparagine" evidence="2">
    <location>
        <position position="534"/>
    </location>
</feature>
<feature type="glycosylation site" description="N-linked (GlcNAc...) asparagine" evidence="2">
    <location>
        <position position="540"/>
    </location>
</feature>
<dbReference type="EC" id="3.6.1.10"/>
<dbReference type="EMBL" id="AL389890">
    <property type="protein sequence ID" value="CAB97279.2"/>
    <property type="status" value="ALT_SEQ"/>
    <property type="molecule type" value="Genomic_DNA"/>
</dbReference>
<dbReference type="EMBL" id="CM002236">
    <property type="protein sequence ID" value="EAA36146.3"/>
    <property type="status" value="ALT_INIT"/>
    <property type="molecule type" value="Genomic_DNA"/>
</dbReference>
<dbReference type="PIR" id="T50959">
    <property type="entry name" value="T50959"/>
</dbReference>
<dbReference type="RefSeq" id="XP_965382.3">
    <property type="nucleotide sequence ID" value="XM_960289.3"/>
</dbReference>
<dbReference type="SMR" id="Q9P3S1"/>
<dbReference type="FunCoup" id="Q9P3S1">
    <property type="interactions" value="187"/>
</dbReference>
<dbReference type="STRING" id="367110.Q9P3S1"/>
<dbReference type="GlyCosmos" id="Q9P3S1">
    <property type="glycosylation" value="4 sites, No reported glycans"/>
</dbReference>
<dbReference type="PaxDb" id="5141-EFNCRP00000002488"/>
<dbReference type="EnsemblFungi" id="EAA36146">
    <property type="protein sequence ID" value="EAA36146"/>
    <property type="gene ID" value="NCU02996"/>
</dbReference>
<dbReference type="GeneID" id="3881532"/>
<dbReference type="KEGG" id="ncr:NCU02996"/>
<dbReference type="HOGENOM" id="CLU_013424_1_1_1"/>
<dbReference type="InParanoid" id="Q9P3S1"/>
<dbReference type="OrthoDB" id="348678at2759"/>
<dbReference type="Proteomes" id="UP000001805">
    <property type="component" value="Chromosome 1, Linkage Group I"/>
</dbReference>
<dbReference type="GO" id="GO:0000324">
    <property type="term" value="C:fungal-type vacuole"/>
    <property type="evidence" value="ECO:0000318"/>
    <property type="project" value="GO_Central"/>
</dbReference>
<dbReference type="GO" id="GO:0005774">
    <property type="term" value="C:vacuolar membrane"/>
    <property type="evidence" value="ECO:0007669"/>
    <property type="project" value="UniProtKB-SubCell"/>
</dbReference>
<dbReference type="GO" id="GO:0000298">
    <property type="term" value="F:endopolyphosphatase activity"/>
    <property type="evidence" value="ECO:0000318"/>
    <property type="project" value="GO_Central"/>
</dbReference>
<dbReference type="GO" id="GO:0004309">
    <property type="term" value="F:exopolyphosphatase activity"/>
    <property type="evidence" value="ECO:0000318"/>
    <property type="project" value="GO_Central"/>
</dbReference>
<dbReference type="GO" id="GO:0006798">
    <property type="term" value="P:polyphosphate catabolic process"/>
    <property type="evidence" value="ECO:0000318"/>
    <property type="project" value="GO_Central"/>
</dbReference>
<dbReference type="FunFam" id="3.60.21.10:FF:000082">
    <property type="entry name" value="Endopolyphosphatase"/>
    <property type="match status" value="1"/>
</dbReference>
<dbReference type="Gene3D" id="3.60.21.10">
    <property type="match status" value="1"/>
</dbReference>
<dbReference type="InterPro" id="IPR012358">
    <property type="entry name" value="EndopolyPtase_N1"/>
</dbReference>
<dbReference type="InterPro" id="IPR029052">
    <property type="entry name" value="Metallo-depent_PP-like"/>
</dbReference>
<dbReference type="PANTHER" id="PTHR10340:SF55">
    <property type="entry name" value="ENDOPOLYPHOSPHATASE"/>
    <property type="match status" value="1"/>
</dbReference>
<dbReference type="PANTHER" id="PTHR10340">
    <property type="entry name" value="SPHINGOMYELIN PHOSPHODIESTERASE"/>
    <property type="match status" value="1"/>
</dbReference>
<dbReference type="PIRSF" id="PIRSF027093">
    <property type="entry name" value="EndopolyPtase_N1"/>
    <property type="match status" value="1"/>
</dbReference>
<dbReference type="SUPFAM" id="SSF56300">
    <property type="entry name" value="Metallo-dependent phosphatases"/>
    <property type="match status" value="1"/>
</dbReference>
<keyword id="KW-0325">Glycoprotein</keyword>
<keyword id="KW-0378">Hydrolase</keyword>
<keyword id="KW-0472">Membrane</keyword>
<keyword id="KW-1185">Reference proteome</keyword>
<keyword id="KW-0735">Signal-anchor</keyword>
<keyword id="KW-0812">Transmembrane</keyword>
<keyword id="KW-1133">Transmembrane helix</keyword>
<keyword id="KW-0926">Vacuole</keyword>
<accession>Q9P3S1</accession>
<accession>Q7RUX7</accession>